<sequence length="200" mass="22051">MTSKIFSPKISAVIESLRKLPTIGKKSSQRLALYLLDKSPETAIAIANSLLDATANIKKCVYCQALTEDDVCNICSNTNRDDTKLCIIESMLDMIAIEEAGIYRGKYFVLNGRISPLDGIGPSELKLDILQQIIADRKIDEVILAISPTVEGETTAHFISQMIAKDIKISRIGFGVPFGGELEYLDQQTLLHAFNTRTNI</sequence>
<keyword id="KW-0227">DNA damage</keyword>
<keyword id="KW-0233">DNA recombination</keyword>
<keyword id="KW-0234">DNA repair</keyword>
<keyword id="KW-0479">Metal-binding</keyword>
<keyword id="KW-0862">Zinc</keyword>
<keyword id="KW-0863">Zinc-finger</keyword>
<feature type="chain" id="PRO_1000001544" description="Recombination protein RecR">
    <location>
        <begin position="1"/>
        <end position="200"/>
    </location>
</feature>
<feature type="domain" description="Toprim" evidence="1">
    <location>
        <begin position="83"/>
        <end position="177"/>
    </location>
</feature>
<feature type="zinc finger region" description="C4-type" evidence="1">
    <location>
        <begin position="60"/>
        <end position="75"/>
    </location>
</feature>
<comment type="function">
    <text evidence="1">May play a role in DNA repair. It seems to be involved in an RecBC-independent recombinational process of DNA repair. It may act with RecF and RecO.</text>
</comment>
<comment type="similarity">
    <text evidence="1">Belongs to the RecR family.</text>
</comment>
<evidence type="ECO:0000255" key="1">
    <source>
        <dbReference type="HAMAP-Rule" id="MF_00017"/>
    </source>
</evidence>
<accession>Q0BL35</accession>
<protein>
    <recommendedName>
        <fullName evidence="1">Recombination protein RecR</fullName>
    </recommendedName>
</protein>
<reference key="1">
    <citation type="journal article" date="2006" name="J. Bacteriol.">
        <title>Chromosome rearrangement and diversification of Francisella tularensis revealed by the type B (OSU18) genome sequence.</title>
        <authorList>
            <person name="Petrosino J.F."/>
            <person name="Xiang Q."/>
            <person name="Karpathy S.E."/>
            <person name="Jiang H."/>
            <person name="Yerrapragada S."/>
            <person name="Liu Y."/>
            <person name="Gioia J."/>
            <person name="Hemphill L."/>
            <person name="Gonzalez A."/>
            <person name="Raghavan T.M."/>
            <person name="Uzman A."/>
            <person name="Fox G.E."/>
            <person name="Highlander S."/>
            <person name="Reichard M."/>
            <person name="Morton R.J."/>
            <person name="Clinkenbeard K.D."/>
            <person name="Weinstock G.M."/>
        </authorList>
    </citation>
    <scope>NUCLEOTIDE SEQUENCE [LARGE SCALE GENOMIC DNA]</scope>
    <source>
        <strain>OSU18</strain>
    </source>
</reference>
<name>RECR_FRATO</name>
<proteinExistence type="inferred from homology"/>
<gene>
    <name evidence="1" type="primary">recR</name>
    <name type="ordered locus">FTH_1375</name>
</gene>
<organism>
    <name type="scientific">Francisella tularensis subsp. holarctica (strain OSU18)</name>
    <dbReference type="NCBI Taxonomy" id="393011"/>
    <lineage>
        <taxon>Bacteria</taxon>
        <taxon>Pseudomonadati</taxon>
        <taxon>Pseudomonadota</taxon>
        <taxon>Gammaproteobacteria</taxon>
        <taxon>Thiotrichales</taxon>
        <taxon>Francisellaceae</taxon>
        <taxon>Francisella</taxon>
    </lineage>
</organism>
<dbReference type="EMBL" id="CP000437">
    <property type="protein sequence ID" value="ABI83199.1"/>
    <property type="molecule type" value="Genomic_DNA"/>
</dbReference>
<dbReference type="RefSeq" id="WP_003016683.1">
    <property type="nucleotide sequence ID" value="NC_017463.1"/>
</dbReference>
<dbReference type="SMR" id="Q0BL35"/>
<dbReference type="KEGG" id="fth:FTH_1375"/>
<dbReference type="GO" id="GO:0003677">
    <property type="term" value="F:DNA binding"/>
    <property type="evidence" value="ECO:0007669"/>
    <property type="project" value="UniProtKB-UniRule"/>
</dbReference>
<dbReference type="GO" id="GO:0008270">
    <property type="term" value="F:zinc ion binding"/>
    <property type="evidence" value="ECO:0007669"/>
    <property type="project" value="UniProtKB-KW"/>
</dbReference>
<dbReference type="GO" id="GO:0006310">
    <property type="term" value="P:DNA recombination"/>
    <property type="evidence" value="ECO:0007669"/>
    <property type="project" value="UniProtKB-UniRule"/>
</dbReference>
<dbReference type="GO" id="GO:0006281">
    <property type="term" value="P:DNA repair"/>
    <property type="evidence" value="ECO:0007669"/>
    <property type="project" value="UniProtKB-UniRule"/>
</dbReference>
<dbReference type="CDD" id="cd01025">
    <property type="entry name" value="TOPRIM_recR"/>
    <property type="match status" value="1"/>
</dbReference>
<dbReference type="Gene3D" id="3.40.1360.10">
    <property type="match status" value="1"/>
</dbReference>
<dbReference type="Gene3D" id="6.10.250.240">
    <property type="match status" value="1"/>
</dbReference>
<dbReference type="Gene3D" id="1.10.8.420">
    <property type="entry name" value="RecR Domain 1"/>
    <property type="match status" value="1"/>
</dbReference>
<dbReference type="HAMAP" id="MF_00017">
    <property type="entry name" value="RecR"/>
    <property type="match status" value="1"/>
</dbReference>
<dbReference type="InterPro" id="IPR000093">
    <property type="entry name" value="DNA_Rcmb_RecR"/>
</dbReference>
<dbReference type="InterPro" id="IPR023627">
    <property type="entry name" value="Rcmb_RecR"/>
</dbReference>
<dbReference type="InterPro" id="IPR015967">
    <property type="entry name" value="Rcmb_RecR_Znf"/>
</dbReference>
<dbReference type="InterPro" id="IPR006171">
    <property type="entry name" value="TOPRIM_dom"/>
</dbReference>
<dbReference type="InterPro" id="IPR034137">
    <property type="entry name" value="TOPRIM_RecR"/>
</dbReference>
<dbReference type="NCBIfam" id="TIGR00615">
    <property type="entry name" value="recR"/>
    <property type="match status" value="1"/>
</dbReference>
<dbReference type="PANTHER" id="PTHR30446">
    <property type="entry name" value="RECOMBINATION PROTEIN RECR"/>
    <property type="match status" value="1"/>
</dbReference>
<dbReference type="PANTHER" id="PTHR30446:SF0">
    <property type="entry name" value="RECOMBINATION PROTEIN RECR"/>
    <property type="match status" value="1"/>
</dbReference>
<dbReference type="Pfam" id="PF21175">
    <property type="entry name" value="RecR_C"/>
    <property type="match status" value="1"/>
</dbReference>
<dbReference type="Pfam" id="PF21176">
    <property type="entry name" value="RecR_HhH"/>
    <property type="match status" value="1"/>
</dbReference>
<dbReference type="Pfam" id="PF02132">
    <property type="entry name" value="RecR_ZnF"/>
    <property type="match status" value="1"/>
</dbReference>
<dbReference type="Pfam" id="PF13662">
    <property type="entry name" value="Toprim_4"/>
    <property type="match status" value="1"/>
</dbReference>
<dbReference type="SMART" id="SM00493">
    <property type="entry name" value="TOPRIM"/>
    <property type="match status" value="1"/>
</dbReference>
<dbReference type="SUPFAM" id="SSF111304">
    <property type="entry name" value="Recombination protein RecR"/>
    <property type="match status" value="1"/>
</dbReference>
<dbReference type="PROSITE" id="PS01300">
    <property type="entry name" value="RECR"/>
    <property type="match status" value="1"/>
</dbReference>
<dbReference type="PROSITE" id="PS50880">
    <property type="entry name" value="TOPRIM"/>
    <property type="match status" value="1"/>
</dbReference>